<reference key="1">
    <citation type="journal article" date="2004" name="Nature">
        <title>The DNA sequence and comparative analysis of human chromosome 5.</title>
        <authorList>
            <person name="Schmutz J."/>
            <person name="Martin J."/>
            <person name="Terry A."/>
            <person name="Couronne O."/>
            <person name="Grimwood J."/>
            <person name="Lowry S."/>
            <person name="Gordon L.A."/>
            <person name="Scott D."/>
            <person name="Xie G."/>
            <person name="Huang W."/>
            <person name="Hellsten U."/>
            <person name="Tran-Gyamfi M."/>
            <person name="She X."/>
            <person name="Prabhakar S."/>
            <person name="Aerts A."/>
            <person name="Altherr M."/>
            <person name="Bajorek E."/>
            <person name="Black S."/>
            <person name="Branscomb E."/>
            <person name="Caoile C."/>
            <person name="Challacombe J.F."/>
            <person name="Chan Y.M."/>
            <person name="Denys M."/>
            <person name="Detter J.C."/>
            <person name="Escobar J."/>
            <person name="Flowers D."/>
            <person name="Fotopulos D."/>
            <person name="Glavina T."/>
            <person name="Gomez M."/>
            <person name="Gonzales E."/>
            <person name="Goodstein D."/>
            <person name="Grigoriev I."/>
            <person name="Groza M."/>
            <person name="Hammon N."/>
            <person name="Hawkins T."/>
            <person name="Haydu L."/>
            <person name="Israni S."/>
            <person name="Jett J."/>
            <person name="Kadner K."/>
            <person name="Kimball H."/>
            <person name="Kobayashi A."/>
            <person name="Lopez F."/>
            <person name="Lou Y."/>
            <person name="Martinez D."/>
            <person name="Medina C."/>
            <person name="Morgan J."/>
            <person name="Nandkeshwar R."/>
            <person name="Noonan J.P."/>
            <person name="Pitluck S."/>
            <person name="Pollard M."/>
            <person name="Predki P."/>
            <person name="Priest J."/>
            <person name="Ramirez L."/>
            <person name="Retterer J."/>
            <person name="Rodriguez A."/>
            <person name="Rogers S."/>
            <person name="Salamov A."/>
            <person name="Salazar A."/>
            <person name="Thayer N."/>
            <person name="Tice H."/>
            <person name="Tsai M."/>
            <person name="Ustaszewska A."/>
            <person name="Vo N."/>
            <person name="Wheeler J."/>
            <person name="Wu K."/>
            <person name="Yang J."/>
            <person name="Dickson M."/>
            <person name="Cheng J.-F."/>
            <person name="Eichler E.E."/>
            <person name="Olsen A."/>
            <person name="Pennacchio L.A."/>
            <person name="Rokhsar D.S."/>
            <person name="Richardson P."/>
            <person name="Lucas S.M."/>
            <person name="Myers R.M."/>
            <person name="Rubin E.M."/>
        </authorList>
    </citation>
    <scope>NUCLEOTIDE SEQUENCE [LARGE SCALE GENOMIC DNA]</scope>
</reference>
<reference key="2">
    <citation type="journal article" date="2004" name="Genome Res.">
        <title>The status, quality, and expansion of the NIH full-length cDNA project: the Mammalian Gene Collection (MGC).</title>
        <authorList>
            <consortium name="The MGC Project Team"/>
        </authorList>
    </citation>
    <scope>NUCLEOTIDE SEQUENCE [LARGE SCALE MRNA] OF 1-75</scope>
    <source>
        <tissue>Lung</tissue>
    </source>
</reference>
<reference key="3">
    <citation type="journal article" date="2004" name="Nat. Genet.">
        <title>Complete sequencing and characterization of 21,243 full-length human cDNAs.</title>
        <authorList>
            <person name="Ota T."/>
            <person name="Suzuki Y."/>
            <person name="Nishikawa T."/>
            <person name="Otsuki T."/>
            <person name="Sugiyama T."/>
            <person name="Irie R."/>
            <person name="Wakamatsu A."/>
            <person name="Hayashi K."/>
            <person name="Sato H."/>
            <person name="Nagai K."/>
            <person name="Kimura K."/>
            <person name="Makita H."/>
            <person name="Sekine M."/>
            <person name="Obayashi M."/>
            <person name="Nishi T."/>
            <person name="Shibahara T."/>
            <person name="Tanaka T."/>
            <person name="Ishii S."/>
            <person name="Yamamoto J."/>
            <person name="Saito K."/>
            <person name="Kawai Y."/>
            <person name="Isono Y."/>
            <person name="Nakamura Y."/>
            <person name="Nagahari K."/>
            <person name="Murakami K."/>
            <person name="Yasuda T."/>
            <person name="Iwayanagi T."/>
            <person name="Wagatsuma M."/>
            <person name="Shiratori A."/>
            <person name="Sudo H."/>
            <person name="Hosoiri T."/>
            <person name="Kaku Y."/>
            <person name="Kodaira H."/>
            <person name="Kondo H."/>
            <person name="Sugawara M."/>
            <person name="Takahashi M."/>
            <person name="Kanda K."/>
            <person name="Yokoi T."/>
            <person name="Furuya T."/>
            <person name="Kikkawa E."/>
            <person name="Omura Y."/>
            <person name="Abe K."/>
            <person name="Kamihara K."/>
            <person name="Katsuta N."/>
            <person name="Sato K."/>
            <person name="Tanikawa M."/>
            <person name="Yamazaki M."/>
            <person name="Ninomiya K."/>
            <person name="Ishibashi T."/>
            <person name="Yamashita H."/>
            <person name="Murakawa K."/>
            <person name="Fujimori K."/>
            <person name="Tanai H."/>
            <person name="Kimata M."/>
            <person name="Watanabe M."/>
            <person name="Hiraoka S."/>
            <person name="Chiba Y."/>
            <person name="Ishida S."/>
            <person name="Ono Y."/>
            <person name="Takiguchi S."/>
            <person name="Watanabe S."/>
            <person name="Yosida M."/>
            <person name="Hotuta T."/>
            <person name="Kusano J."/>
            <person name="Kanehori K."/>
            <person name="Takahashi-Fujii A."/>
            <person name="Hara H."/>
            <person name="Tanase T.-O."/>
            <person name="Nomura Y."/>
            <person name="Togiya S."/>
            <person name="Komai F."/>
            <person name="Hara R."/>
            <person name="Takeuchi K."/>
            <person name="Arita M."/>
            <person name="Imose N."/>
            <person name="Musashino K."/>
            <person name="Yuuki H."/>
            <person name="Oshima A."/>
            <person name="Sasaki N."/>
            <person name="Aotsuka S."/>
            <person name="Yoshikawa Y."/>
            <person name="Matsunawa H."/>
            <person name="Ichihara T."/>
            <person name="Shiohata N."/>
            <person name="Sano S."/>
            <person name="Moriya S."/>
            <person name="Momiyama H."/>
            <person name="Satoh N."/>
            <person name="Takami S."/>
            <person name="Terashima Y."/>
            <person name="Suzuki O."/>
            <person name="Nakagawa S."/>
            <person name="Senoh A."/>
            <person name="Mizoguchi H."/>
            <person name="Goto Y."/>
            <person name="Shimizu F."/>
            <person name="Wakebe H."/>
            <person name="Hishigaki H."/>
            <person name="Watanabe T."/>
            <person name="Sugiyama A."/>
            <person name="Takemoto M."/>
            <person name="Kawakami B."/>
            <person name="Yamazaki M."/>
            <person name="Watanabe K."/>
            <person name="Kumagai A."/>
            <person name="Itakura S."/>
            <person name="Fukuzumi Y."/>
            <person name="Fujimori Y."/>
            <person name="Komiyama M."/>
            <person name="Tashiro H."/>
            <person name="Tanigami A."/>
            <person name="Fujiwara T."/>
            <person name="Ono T."/>
            <person name="Yamada K."/>
            <person name="Fujii Y."/>
            <person name="Ozaki K."/>
            <person name="Hirao M."/>
            <person name="Ohmori Y."/>
            <person name="Kawabata A."/>
            <person name="Hikiji T."/>
            <person name="Kobatake N."/>
            <person name="Inagaki H."/>
            <person name="Ikema Y."/>
            <person name="Okamoto S."/>
            <person name="Okitani R."/>
            <person name="Kawakami T."/>
            <person name="Noguchi S."/>
            <person name="Itoh T."/>
            <person name="Shigeta K."/>
            <person name="Senba T."/>
            <person name="Matsumura K."/>
            <person name="Nakajima Y."/>
            <person name="Mizuno T."/>
            <person name="Morinaga M."/>
            <person name="Sasaki M."/>
            <person name="Togashi T."/>
            <person name="Oyama M."/>
            <person name="Hata H."/>
            <person name="Watanabe M."/>
            <person name="Komatsu T."/>
            <person name="Mizushima-Sugano J."/>
            <person name="Satoh T."/>
            <person name="Shirai Y."/>
            <person name="Takahashi Y."/>
            <person name="Nakagawa K."/>
            <person name="Okumura K."/>
            <person name="Nagase T."/>
            <person name="Nomura N."/>
            <person name="Kikuchi H."/>
            <person name="Masuho Y."/>
            <person name="Yamashita R."/>
            <person name="Nakai K."/>
            <person name="Yada T."/>
            <person name="Nakamura Y."/>
            <person name="Ohara O."/>
            <person name="Isogai T."/>
            <person name="Sugano S."/>
        </authorList>
    </citation>
    <scope>NUCLEOTIDE SEQUENCE [LARGE SCALE MRNA] OF 237-897</scope>
    <source>
        <tissue>Testis</tissue>
    </source>
</reference>
<reference key="4">
    <citation type="journal article" date="1995" name="Biochem. Biophys. Res. Commun.">
        <title>Identification of multiple transcribed sequences from the spinal muscular atrophy region of human chromosome 5.</title>
        <authorList>
            <person name="Pizzuti A."/>
            <person name="Colosimo A."/>
            <person name="Ratti A."/>
            <person name="Capon F."/>
            <person name="Gennarelli M."/>
            <person name="Silani V."/>
            <person name="Ghezzi C."/>
            <person name="Lo Cicero S."/>
            <person name="Calabrese G."/>
            <person name="Palka G."/>
            <person name="Scarlato G."/>
            <person name="Novelli G."/>
            <person name="Dallapiccola B."/>
        </authorList>
    </citation>
    <scope>NUCLEOTIDE SEQUENCE [MRNA] OF 566-645</scope>
    <source>
        <tissue>Spinal cord</tissue>
    </source>
</reference>
<reference key="5">
    <citation type="journal article" date="1996" name="Biochim. Biophys. Acta">
        <title>Novel transcribed sequences represented in the complex genomic region 5q13.</title>
        <authorList>
            <person name="Morrison K.E."/>
            <person name="Qureshi S.J."/>
            <person name="Anderson S."/>
            <person name="Borrett J.P."/>
            <person name="Theodosiou A."/>
            <person name="Rodrigues N."/>
            <person name="Blake D."/>
            <person name="Nesbit A."/>
            <person name="Davies K.E."/>
            <person name="Porteous D.J."/>
            <person name="Brookes A.J."/>
        </authorList>
    </citation>
    <scope>NUCLEOTIDE SEQUENCE [MRNA] OF 736-832</scope>
    <source>
        <tissue>Fetal brain</tissue>
    </source>
</reference>
<dbReference type="EMBL" id="AC139272">
    <property type="status" value="NOT_ANNOTATED_CDS"/>
    <property type="molecule type" value="Genomic_DNA"/>
</dbReference>
<dbReference type="EMBL" id="BC051369">
    <property type="status" value="NOT_ANNOTATED_CDS"/>
    <property type="molecule type" value="mRNA"/>
</dbReference>
<dbReference type="EMBL" id="AK097411">
    <property type="status" value="NOT_ANNOTATED_CDS"/>
    <property type="molecule type" value="mRNA"/>
</dbReference>
<dbReference type="EMBL" id="L40517">
    <property type="status" value="NOT_ANNOTATED_CDS"/>
    <property type="molecule type" value="mRNA"/>
</dbReference>
<dbReference type="EMBL" id="Z70704">
    <property type="status" value="NOT_ANNOTATED_CDS"/>
    <property type="molecule type" value="mRNA"/>
</dbReference>
<dbReference type="SMR" id="A6NNC1"/>
<dbReference type="GlyGen" id="A6NNC1">
    <property type="glycosylation" value="4 sites, 1 O-linked glycan (3 sites)"/>
</dbReference>
<dbReference type="iPTMnet" id="A6NNC1"/>
<dbReference type="PhosphoSitePlus" id="A6NNC1"/>
<dbReference type="BioMuta" id="-"/>
<dbReference type="MassIVE" id="A6NNC1"/>
<dbReference type="PeptideAtlas" id="A6NNC1"/>
<dbReference type="neXtProt" id="NX_A6NNC1"/>
<dbReference type="InParanoid" id="A6NNC1"/>
<dbReference type="PAN-GO" id="A6NNC1">
    <property type="GO annotations" value="0 GO annotations based on evolutionary models"/>
</dbReference>
<dbReference type="PhylomeDB" id="A6NNC1"/>
<dbReference type="Pharos" id="A6NNC1">
    <property type="development level" value="Tdark"/>
</dbReference>
<dbReference type="Proteomes" id="UP000005640">
    <property type="component" value="Unplaced"/>
</dbReference>
<dbReference type="RNAct" id="A6NNC1">
    <property type="molecule type" value="protein"/>
</dbReference>
<dbReference type="GO" id="GO:0016020">
    <property type="term" value="C:membrane"/>
    <property type="evidence" value="ECO:0007669"/>
    <property type="project" value="UniProtKB-SubCell"/>
</dbReference>
<dbReference type="InterPro" id="IPR043220">
    <property type="entry name" value="POM121-like_prot_1"/>
</dbReference>
<dbReference type="PANTHER" id="PTHR15566">
    <property type="entry name" value="POM121-LIKE"/>
    <property type="match status" value="1"/>
</dbReference>
<dbReference type="PANTHER" id="PTHR15566:SF4">
    <property type="entry name" value="POM121-LIKE PROTEIN 1-RELATED"/>
    <property type="match status" value="1"/>
</dbReference>
<dbReference type="Pfam" id="PF15229">
    <property type="entry name" value="POM121"/>
    <property type="match status" value="2"/>
</dbReference>
<evidence type="ECO:0000255" key="1"/>
<evidence type="ECO:0000256" key="2">
    <source>
        <dbReference type="SAM" id="MobiDB-lite"/>
    </source>
</evidence>
<evidence type="ECO:0000305" key="3"/>
<sequence>MPEQDKDPRVQENPDDQRTVPEVTGDARSAFWPLRDNGGPSPFVPRPGPLQTDLHAQSSEIRYNHTSQTSWTSSSTKRNAISSSYSSTGGLPGLKQRRGPASSRCQLTLSYSKTVSEDRPQAVSSGHTRCEKGADTAPGQTIAPTGGSPRSQDSRPRRRKIPLLPRRRGEPLMLPPPLELGYRVTAEDLHLEKETAFQRINSALHVEDKAIPDCRPSRPSHTLSSLATGASGGPPVSKAPTMDAQQDRPKSQDSLGLLAPLASAAEVPSTAPVSGKKHRPPGPLFSSSDPLPATSYHSRDTAQVTSLIPATFTAASRDAGMRRTRSAPAAATAAPPPSTLNNTSGSLLNAVDGGPSHFLASATAAARAQRSEVRYNQRSQTSRTRSCLKRNASSSSSSHSSTEGLQELKRRRGPASSHCQLAHSSSNTVSEDGPQAVSSGHRCENKAGTAPGQTLAPRGGSPRSQASRPHINSALYVEDKAISDCRPSRPSHTLSSLATGASGGPPVSKAPTMDAQQDRPKSQDCLGLVAPLASAAEVPSTAPVSGKKHRPPGPLFSSSDPLPATSSHSRDSAQVTSLIPATFTAASRDAGMRRTRPGTSAPAAAAAALPPSTLNPTSGSLLNAVDGGPSHFLASATAAARAQRSEVRYNQRSQTSRTRSCLKRNASSSSHSSTEGLQELKRRRGPASSHCQLAHSSSNTVSEDGPQAVSSGHRCENKAGTAPGQTLAPRGGYPRSQASRPRINSALHVEDKAISDCRPSRPSHTLSSLATGASGGPPVSKAPTMDAQQDRPKSQDCLGLLAPLASAAEVSSTAPVSGKKHRPPGPLFSSSDPLPATSSHSGDSAQDTSLIPAPFTPASRDAGIRRMFRVRNCLRGLGLFLLVFSFFFLLTWASFSF</sequence>
<keyword id="KW-0472">Membrane</keyword>
<keyword id="KW-1267">Proteomics identification</keyword>
<keyword id="KW-1185">Reference proteome</keyword>
<keyword id="KW-0812">Transmembrane</keyword>
<keyword id="KW-1133">Transmembrane helix</keyword>
<comment type="subcellular location">
    <subcellularLocation>
        <location evidence="3">Membrane</location>
        <topology evidence="3">Single-pass membrane protein</topology>
    </subcellularLocation>
</comment>
<comment type="similarity">
    <text evidence="3">Belongs to the POM121 family.</text>
</comment>
<comment type="caution">
    <text evidence="3">Product of a dubious CDS prediction.</text>
</comment>
<accession>A6NNC1</accession>
<accession>A6NNK7</accession>
<accession>Q8N834</accession>
<feature type="chain" id="PRO_0000346775" description="Putative POM121-like protein 1-like">
    <location>
        <begin position="1"/>
        <end position="897"/>
    </location>
</feature>
<feature type="transmembrane region" description="Helical" evidence="1">
    <location>
        <begin position="877"/>
        <end position="897"/>
    </location>
</feature>
<feature type="region of interest" description="Disordered" evidence="2">
    <location>
        <begin position="1"/>
        <end position="177"/>
    </location>
</feature>
<feature type="region of interest" description="Disordered" evidence="2">
    <location>
        <begin position="211"/>
        <end position="252"/>
    </location>
</feature>
<feature type="region of interest" description="Disordered" evidence="2">
    <location>
        <begin position="266"/>
        <end position="302"/>
    </location>
</feature>
<feature type="region of interest" description="Disordered" evidence="2">
    <location>
        <begin position="315"/>
        <end position="348"/>
    </location>
</feature>
<feature type="region of interest" description="Disordered" evidence="2">
    <location>
        <begin position="362"/>
        <end position="469"/>
    </location>
</feature>
<feature type="region of interest" description="Disordered" evidence="2">
    <location>
        <begin position="484"/>
        <end position="522"/>
    </location>
</feature>
<feature type="region of interest" description="Disordered" evidence="2">
    <location>
        <begin position="536"/>
        <end position="612"/>
    </location>
</feature>
<feature type="region of interest" description="Disordered" evidence="2">
    <location>
        <begin position="642"/>
        <end position="741"/>
    </location>
</feature>
<feature type="region of interest" description="Disordered" evidence="2">
    <location>
        <begin position="753"/>
        <end position="793"/>
    </location>
</feature>
<feature type="region of interest" description="Disordered" evidence="2">
    <location>
        <begin position="812"/>
        <end position="856"/>
    </location>
</feature>
<feature type="compositionally biased region" description="Basic and acidic residues" evidence="2">
    <location>
        <begin position="1"/>
        <end position="19"/>
    </location>
</feature>
<feature type="compositionally biased region" description="Polar residues" evidence="2">
    <location>
        <begin position="54"/>
        <end position="65"/>
    </location>
</feature>
<feature type="compositionally biased region" description="Low complexity" evidence="2">
    <location>
        <begin position="66"/>
        <end position="76"/>
    </location>
</feature>
<feature type="compositionally biased region" description="Polar residues" evidence="2">
    <location>
        <begin position="77"/>
        <end position="89"/>
    </location>
</feature>
<feature type="compositionally biased region" description="Polar residues" evidence="2">
    <location>
        <begin position="103"/>
        <end position="114"/>
    </location>
</feature>
<feature type="compositionally biased region" description="Polar residues" evidence="2">
    <location>
        <begin position="219"/>
        <end position="228"/>
    </location>
</feature>
<feature type="compositionally biased region" description="Polar residues" evidence="2">
    <location>
        <begin position="376"/>
        <end position="385"/>
    </location>
</feature>
<feature type="compositionally biased region" description="Polar residues" evidence="2">
    <location>
        <begin position="417"/>
        <end position="430"/>
    </location>
</feature>
<feature type="compositionally biased region" description="Polar residues" evidence="2">
    <location>
        <begin position="490"/>
        <end position="499"/>
    </location>
</feature>
<feature type="compositionally biased region" description="Polar residues" evidence="2">
    <location>
        <begin position="556"/>
        <end position="579"/>
    </location>
</feature>
<feature type="compositionally biased region" description="Low complexity" evidence="2">
    <location>
        <begin position="599"/>
        <end position="612"/>
    </location>
</feature>
<feature type="compositionally biased region" description="Polar residues" evidence="2">
    <location>
        <begin position="650"/>
        <end position="676"/>
    </location>
</feature>
<feature type="compositionally biased region" description="Polar residues" evidence="2">
    <location>
        <begin position="689"/>
        <end position="702"/>
    </location>
</feature>
<feature type="compositionally biased region" description="Polar residues" evidence="2">
    <location>
        <begin position="762"/>
        <end position="771"/>
    </location>
</feature>
<feature type="compositionally biased region" description="Polar residues" evidence="2">
    <location>
        <begin position="828"/>
        <end position="849"/>
    </location>
</feature>
<feature type="sequence conflict" description="In Ref. 2; BC051369." evidence="3" ref="2">
    <original>S</original>
    <variation>N</variation>
    <location>
        <position position="75"/>
    </location>
</feature>
<feature type="sequence conflict" description="In Ref. 3; AK097411." evidence="3" ref="3">
    <original>Q</original>
    <variation>R</variation>
    <location>
        <position position="678"/>
    </location>
</feature>
<feature type="sequence conflict" description="In Ref. 3; AK097411." evidence="3" ref="3">
    <original>L</original>
    <variation>V</variation>
    <location>
        <position position="680"/>
    </location>
</feature>
<feature type="sequence conflict" description="In Ref. 3; AK097411." evidence="3" ref="3">
    <original>Y</original>
    <variation>S</variation>
    <location>
        <position position="733"/>
    </location>
</feature>
<feature type="sequence conflict" description="In Ref. 5; Z70704." evidence="3" ref="5">
    <original>K</original>
    <variation>N</variation>
    <location>
        <position position="752"/>
    </location>
</feature>
<feature type="sequence conflict" description="In Ref. 3; AK097411 and 5; Z70704." evidence="3" ref="3 5">
    <original>S</original>
    <variation>F</variation>
    <location>
        <position position="811"/>
    </location>
</feature>
<protein>
    <recommendedName>
        <fullName>Putative POM121-like protein 1-like</fullName>
    </recommendedName>
</protein>
<proteinExistence type="uncertain"/>
<name>P12LL_HUMAN</name>
<organism>
    <name type="scientific">Homo sapiens</name>
    <name type="common">Human</name>
    <dbReference type="NCBI Taxonomy" id="9606"/>
    <lineage>
        <taxon>Eukaryota</taxon>
        <taxon>Metazoa</taxon>
        <taxon>Chordata</taxon>
        <taxon>Craniata</taxon>
        <taxon>Vertebrata</taxon>
        <taxon>Euteleostomi</taxon>
        <taxon>Mammalia</taxon>
        <taxon>Eutheria</taxon>
        <taxon>Euarchontoglires</taxon>
        <taxon>Primates</taxon>
        <taxon>Haplorrhini</taxon>
        <taxon>Catarrhini</taxon>
        <taxon>Hominidae</taxon>
        <taxon>Homo</taxon>
    </lineage>
</organism>